<evidence type="ECO:0000250" key="1">
    <source>
        <dbReference type="UniProtKB" id="P16926"/>
    </source>
</evidence>
<evidence type="ECO:0000255" key="2"/>
<evidence type="ECO:0000256" key="3">
    <source>
        <dbReference type="SAM" id="MobiDB-lite"/>
    </source>
</evidence>
<evidence type="ECO:0000305" key="4"/>
<evidence type="ECO:0000305" key="5">
    <source>
    </source>
</evidence>
<evidence type="ECO:0000312" key="6">
    <source>
        <dbReference type="EMBL" id="CAE53833.1"/>
    </source>
</evidence>
<protein>
    <recommendedName>
        <fullName evidence="1">Cell shape-determining protein MreC</fullName>
    </recommendedName>
    <alternativeName>
        <fullName evidence="1">Cell shape protein MreC</fullName>
    </alternativeName>
    <alternativeName>
        <fullName evidence="1">Rod shape-determining protein MreC</fullName>
    </alternativeName>
</protein>
<comment type="function">
    <text evidence="1">Involved in formation and maintenance of cell shape.</text>
</comment>
<comment type="subcellular location">
    <subcellularLocation>
        <location evidence="5">Cell inner membrane</location>
        <topology evidence="5">Single-pass membrane protein</topology>
    </subcellularLocation>
    <text>Colocalizes with penicillin-binding protein PBP2 throughout the cell cycle. In newly formed and elongating cells, the foci form bands across the cell, which are predominately located at or near midcell. In cells undergoing septation, the foci are not observed at the site of septation but are positioned close to the midcell of the nascent or forming daughter cells.</text>
</comment>
<comment type="similarity">
    <text evidence="4">Belongs to the MreC family.</text>
</comment>
<name>MREC_CERSP</name>
<organism>
    <name type="scientific">Cereibacter sphaeroides</name>
    <name type="common">Rhodobacter sphaeroides</name>
    <dbReference type="NCBI Taxonomy" id="1063"/>
    <lineage>
        <taxon>Bacteria</taxon>
        <taxon>Pseudomonadati</taxon>
        <taxon>Pseudomonadota</taxon>
        <taxon>Alphaproteobacteria</taxon>
        <taxon>Rhodobacterales</taxon>
        <taxon>Paracoccaceae</taxon>
        <taxon>Cereibacter</taxon>
    </lineage>
</organism>
<gene>
    <name evidence="6" type="primary">mreC</name>
</gene>
<reference evidence="6" key="1">
    <citation type="journal article" date="2005" name="J. Bacteriol.">
        <title>Localization of MreB in Rhodobacter sphaeroides under conditions causing changes in cell shape and membrane structure.</title>
        <authorList>
            <person name="Slovak P.M."/>
            <person name="Wadhams G.H."/>
            <person name="Armitage J.P."/>
        </authorList>
    </citation>
    <scope>NUCLEOTIDE SEQUENCE [GENOMIC RNA]</scope>
    <source>
        <strain evidence="6">WS8N</strain>
    </source>
</reference>
<reference evidence="4" key="2">
    <citation type="journal article" date="2006" name="J. Bacteriol.">
        <title>Differential localization of Mre proteins with PBP2 in Rhodobacter sphaeroides.</title>
        <authorList>
            <person name="Slovak P.M."/>
            <person name="Porter S.L."/>
            <person name="Armitage J.P."/>
        </authorList>
    </citation>
    <scope>SUBCELLULAR LOCATION</scope>
    <source>
        <strain>WS8N</strain>
    </source>
</reference>
<sequence>MARDRTRPEDFTRPLRRILVGGLVLLLLGIFLIWRIDSPRVEQFRAALIDRVVPSFEWLMTPMTKVAGMVENFQSYTRIYEQNQELRRELQQMKAWKEAALQLEQKNARLLDLNQVRLDPKLTHVTGVVLADSGSPFRQSVLLNVGARDGIRDGWATMDGIGLVGRISGVGRTTSRVILLTDTSSRIPVTVQPSGQRALLTGDNSPSPPLEFLDKPDLVRPGDRVVTSGDGGVFPADLLVGQVAQGPDRRLRVRLAADYGRLEFLRVLRSHELEPISDPGKLVAEPPAPPAPAAVEGADG</sequence>
<feature type="chain" id="PRO_0000418059" description="Cell shape-determining protein MreC">
    <location>
        <begin position="1"/>
        <end position="300"/>
    </location>
</feature>
<feature type="topological domain" description="Cytoplasmic" evidence="1 2">
    <location>
        <begin position="1"/>
        <end position="17"/>
    </location>
</feature>
<feature type="transmembrane region" description="Helical" evidence="1 2">
    <location>
        <begin position="18"/>
        <end position="38"/>
    </location>
</feature>
<feature type="topological domain" description="Periplasmic" evidence="1 2">
    <location>
        <begin position="39"/>
        <end position="300"/>
    </location>
</feature>
<feature type="region of interest" description="Disordered" evidence="3">
    <location>
        <begin position="277"/>
        <end position="300"/>
    </location>
</feature>
<feature type="coiled-coil region" evidence="2">
    <location>
        <begin position="74"/>
        <end position="117"/>
    </location>
</feature>
<accession>Q70AN6</accession>
<dbReference type="EMBL" id="AJ605582">
    <property type="protein sequence ID" value="CAE53833.1"/>
    <property type="molecule type" value="Genomic_RNA"/>
</dbReference>
<dbReference type="RefSeq" id="WP_002719491.1">
    <property type="nucleotide sequence ID" value="NZ_BJXO01000014.1"/>
</dbReference>
<dbReference type="SMR" id="Q70AN6"/>
<dbReference type="GeneID" id="3719859"/>
<dbReference type="GO" id="GO:0009276">
    <property type="term" value="C:Gram-negative-bacterium-type cell wall"/>
    <property type="evidence" value="ECO:0000314"/>
    <property type="project" value="UniProtKB"/>
</dbReference>
<dbReference type="GO" id="GO:0005886">
    <property type="term" value="C:plasma membrane"/>
    <property type="evidence" value="ECO:0007669"/>
    <property type="project" value="UniProtKB-SubCell"/>
</dbReference>
<dbReference type="GO" id="GO:0008360">
    <property type="term" value="P:regulation of cell shape"/>
    <property type="evidence" value="ECO:0007669"/>
    <property type="project" value="UniProtKB-KW"/>
</dbReference>
<dbReference type="FunFam" id="2.40.10.350:FF:000006">
    <property type="entry name" value="Rod shape-determining protein MreC"/>
    <property type="match status" value="1"/>
</dbReference>
<dbReference type="Gene3D" id="2.40.10.340">
    <property type="entry name" value="Rod shape-determining protein MreC, domain 1"/>
    <property type="match status" value="1"/>
</dbReference>
<dbReference type="Gene3D" id="2.40.10.350">
    <property type="entry name" value="Rod shape-determining protein MreC, domain 2"/>
    <property type="match status" value="1"/>
</dbReference>
<dbReference type="InterPro" id="IPR042177">
    <property type="entry name" value="Cell/Rod_1"/>
</dbReference>
<dbReference type="InterPro" id="IPR042175">
    <property type="entry name" value="Cell/Rod_MreC_2"/>
</dbReference>
<dbReference type="InterPro" id="IPR007221">
    <property type="entry name" value="MreC"/>
</dbReference>
<dbReference type="InterPro" id="IPR055342">
    <property type="entry name" value="MreC_beta-barrel_core"/>
</dbReference>
<dbReference type="NCBIfam" id="TIGR00219">
    <property type="entry name" value="mreC"/>
    <property type="match status" value="1"/>
</dbReference>
<dbReference type="NCBIfam" id="NF010533">
    <property type="entry name" value="PRK13922.9-5"/>
    <property type="match status" value="1"/>
</dbReference>
<dbReference type="PANTHER" id="PTHR34138">
    <property type="entry name" value="CELL SHAPE-DETERMINING PROTEIN MREC"/>
    <property type="match status" value="1"/>
</dbReference>
<dbReference type="PANTHER" id="PTHR34138:SF1">
    <property type="entry name" value="CELL SHAPE-DETERMINING PROTEIN MREC"/>
    <property type="match status" value="1"/>
</dbReference>
<dbReference type="Pfam" id="PF04085">
    <property type="entry name" value="MreC"/>
    <property type="match status" value="1"/>
</dbReference>
<proteinExistence type="inferred from homology"/>
<keyword id="KW-0997">Cell inner membrane</keyword>
<keyword id="KW-1003">Cell membrane</keyword>
<keyword id="KW-0133">Cell shape</keyword>
<keyword id="KW-0175">Coiled coil</keyword>
<keyword id="KW-0472">Membrane</keyword>
<keyword id="KW-0812">Transmembrane</keyword>
<keyword id="KW-1133">Transmembrane helix</keyword>